<name>IF3_SULDN</name>
<gene>
    <name evidence="1" type="primary">infC</name>
    <name type="ordered locus">Suden_0067</name>
</gene>
<proteinExistence type="inferred from homology"/>
<dbReference type="EMBL" id="CP000153">
    <property type="protein sequence ID" value="ABB43348.1"/>
    <property type="molecule type" value="Genomic_DNA"/>
</dbReference>
<dbReference type="SMR" id="Q30UI3"/>
<dbReference type="STRING" id="326298.Suden_0067"/>
<dbReference type="KEGG" id="tdn:Suden_0067"/>
<dbReference type="eggNOG" id="COG0290">
    <property type="taxonomic scope" value="Bacteria"/>
</dbReference>
<dbReference type="HOGENOM" id="CLU_054919_3_2_7"/>
<dbReference type="Proteomes" id="UP000002714">
    <property type="component" value="Chromosome"/>
</dbReference>
<dbReference type="GO" id="GO:0005829">
    <property type="term" value="C:cytosol"/>
    <property type="evidence" value="ECO:0007669"/>
    <property type="project" value="TreeGrafter"/>
</dbReference>
<dbReference type="GO" id="GO:0016020">
    <property type="term" value="C:membrane"/>
    <property type="evidence" value="ECO:0007669"/>
    <property type="project" value="TreeGrafter"/>
</dbReference>
<dbReference type="GO" id="GO:0043022">
    <property type="term" value="F:ribosome binding"/>
    <property type="evidence" value="ECO:0007669"/>
    <property type="project" value="TreeGrafter"/>
</dbReference>
<dbReference type="GO" id="GO:0003743">
    <property type="term" value="F:translation initiation factor activity"/>
    <property type="evidence" value="ECO:0007669"/>
    <property type="project" value="UniProtKB-UniRule"/>
</dbReference>
<dbReference type="GO" id="GO:0032790">
    <property type="term" value="P:ribosome disassembly"/>
    <property type="evidence" value="ECO:0007669"/>
    <property type="project" value="TreeGrafter"/>
</dbReference>
<dbReference type="Gene3D" id="3.30.110.10">
    <property type="entry name" value="Translation initiation factor 3 (IF-3), C-terminal domain"/>
    <property type="match status" value="1"/>
</dbReference>
<dbReference type="Gene3D" id="3.10.20.80">
    <property type="entry name" value="Translation initiation factor 3 (IF-3), N-terminal domain"/>
    <property type="match status" value="1"/>
</dbReference>
<dbReference type="HAMAP" id="MF_00080">
    <property type="entry name" value="IF_3"/>
    <property type="match status" value="1"/>
</dbReference>
<dbReference type="InterPro" id="IPR036788">
    <property type="entry name" value="T_IF-3_C_sf"/>
</dbReference>
<dbReference type="InterPro" id="IPR036787">
    <property type="entry name" value="T_IF-3_N_sf"/>
</dbReference>
<dbReference type="InterPro" id="IPR019813">
    <property type="entry name" value="Translation_initiation_fac3_CS"/>
</dbReference>
<dbReference type="InterPro" id="IPR001288">
    <property type="entry name" value="Translation_initiation_fac_3"/>
</dbReference>
<dbReference type="InterPro" id="IPR019815">
    <property type="entry name" value="Translation_initiation_fac_3_C"/>
</dbReference>
<dbReference type="InterPro" id="IPR019814">
    <property type="entry name" value="Translation_initiation_fac_3_N"/>
</dbReference>
<dbReference type="NCBIfam" id="TIGR00168">
    <property type="entry name" value="infC"/>
    <property type="match status" value="1"/>
</dbReference>
<dbReference type="PANTHER" id="PTHR10938">
    <property type="entry name" value="TRANSLATION INITIATION FACTOR IF-3"/>
    <property type="match status" value="1"/>
</dbReference>
<dbReference type="PANTHER" id="PTHR10938:SF0">
    <property type="entry name" value="TRANSLATION INITIATION FACTOR IF-3, MITOCHONDRIAL"/>
    <property type="match status" value="1"/>
</dbReference>
<dbReference type="Pfam" id="PF00707">
    <property type="entry name" value="IF3_C"/>
    <property type="match status" value="1"/>
</dbReference>
<dbReference type="Pfam" id="PF05198">
    <property type="entry name" value="IF3_N"/>
    <property type="match status" value="1"/>
</dbReference>
<dbReference type="SUPFAM" id="SSF55200">
    <property type="entry name" value="Translation initiation factor IF3, C-terminal domain"/>
    <property type="match status" value="1"/>
</dbReference>
<dbReference type="SUPFAM" id="SSF54364">
    <property type="entry name" value="Translation initiation factor IF3, N-terminal domain"/>
    <property type="match status" value="1"/>
</dbReference>
<dbReference type="PROSITE" id="PS00938">
    <property type="entry name" value="IF3"/>
    <property type="match status" value="1"/>
</dbReference>
<accession>Q30UI3</accession>
<evidence type="ECO:0000255" key="1">
    <source>
        <dbReference type="HAMAP-Rule" id="MF_00080"/>
    </source>
</evidence>
<sequence>MSKKTDRVIMNDDIRVPEVRCNVDGAESLGIVSTDEAMERANELGLDLVLIAPDAKPPVAKIMDYGKYRYQEERKLKEQKKNQVKIDVKEIKLSVKIAENDINYKVKHAREFLAEGKHVKFRVFLKGREMANPESAKDVLLRVWAMIEDVGVMDKEPKFEGRYYNMYVLPQK</sequence>
<comment type="function">
    <text evidence="1">IF-3 binds to the 30S ribosomal subunit and shifts the equilibrium between 70S ribosomes and their 50S and 30S subunits in favor of the free subunits, thus enhancing the availability of 30S subunits on which protein synthesis initiation begins.</text>
</comment>
<comment type="subunit">
    <text evidence="1">Monomer.</text>
</comment>
<comment type="subcellular location">
    <subcellularLocation>
        <location evidence="1">Cytoplasm</location>
    </subcellularLocation>
</comment>
<comment type="similarity">
    <text evidence="1">Belongs to the IF-3 family.</text>
</comment>
<reference key="1">
    <citation type="journal article" date="2008" name="Appl. Environ. Microbiol.">
        <title>Genome of the epsilonproteobacterial chemolithoautotroph Sulfurimonas denitrificans.</title>
        <authorList>
            <person name="Sievert S.M."/>
            <person name="Scott K.M."/>
            <person name="Klotz M.G."/>
            <person name="Chain P.S.G."/>
            <person name="Hauser L.J."/>
            <person name="Hemp J."/>
            <person name="Huegler M."/>
            <person name="Land M."/>
            <person name="Lapidus A."/>
            <person name="Larimer F.W."/>
            <person name="Lucas S."/>
            <person name="Malfatti S.A."/>
            <person name="Meyer F."/>
            <person name="Paulsen I.T."/>
            <person name="Ren Q."/>
            <person name="Simon J."/>
            <person name="Bailey K."/>
            <person name="Diaz E."/>
            <person name="Fitzpatrick K.A."/>
            <person name="Glover B."/>
            <person name="Gwatney N."/>
            <person name="Korajkic A."/>
            <person name="Long A."/>
            <person name="Mobberley J.M."/>
            <person name="Pantry S.N."/>
            <person name="Pazder G."/>
            <person name="Peterson S."/>
            <person name="Quintanilla J.D."/>
            <person name="Sprinkle R."/>
            <person name="Stephens J."/>
            <person name="Thomas P."/>
            <person name="Vaughn R."/>
            <person name="Weber M.J."/>
            <person name="Wooten L.L."/>
        </authorList>
    </citation>
    <scope>NUCLEOTIDE SEQUENCE [LARGE SCALE GENOMIC DNA]</scope>
    <source>
        <strain>ATCC 33889 / DSM 1251</strain>
    </source>
</reference>
<feature type="chain" id="PRO_1000004586" description="Translation initiation factor IF-3">
    <location>
        <begin position="1"/>
        <end position="172"/>
    </location>
</feature>
<keyword id="KW-0963">Cytoplasm</keyword>
<keyword id="KW-0396">Initiation factor</keyword>
<keyword id="KW-0648">Protein biosynthesis</keyword>
<keyword id="KW-1185">Reference proteome</keyword>
<protein>
    <recommendedName>
        <fullName evidence="1">Translation initiation factor IF-3</fullName>
    </recommendedName>
</protein>
<organism>
    <name type="scientific">Sulfurimonas denitrificans (strain ATCC 33889 / DSM 1251)</name>
    <name type="common">Thiomicrospira denitrificans (strain ATCC 33889 / DSM 1251)</name>
    <dbReference type="NCBI Taxonomy" id="326298"/>
    <lineage>
        <taxon>Bacteria</taxon>
        <taxon>Pseudomonadati</taxon>
        <taxon>Campylobacterota</taxon>
        <taxon>Epsilonproteobacteria</taxon>
        <taxon>Campylobacterales</taxon>
        <taxon>Sulfurimonadaceae</taxon>
        <taxon>Sulfurimonas</taxon>
    </lineage>
</organism>